<protein>
    <recommendedName>
        <fullName evidence="4">Adipokinetic hormone</fullName>
        <shortName evidence="4">AKH</shortName>
    </recommendedName>
</protein>
<reference evidence="5" key="1">
    <citation type="journal article" date="2012" name="Syst. Biol.">
        <title>Peptidomics-based phylogeny and biogeography of Mantophasmatodea (Hexapoda).</title>
        <authorList>
            <person name="Predel R."/>
            <person name="Neupert S."/>
            <person name="Huetteroth W."/>
            <person name="Kahnt J."/>
            <person name="Waidelich D."/>
            <person name="Roth S."/>
        </authorList>
    </citation>
    <scope>PROTEIN SEQUENCE</scope>
    <scope>PYROGLUTAMATE FORMATION AT GLN-1</scope>
    <scope>AMIDATION AT TRP-8</scope>
    <source>
        <tissue evidence="3">Corpora cardiaca</tissue>
    </source>
</reference>
<keyword id="KW-0027">Amidation</keyword>
<keyword id="KW-0903">Direct protein sequencing</keyword>
<keyword id="KW-0286">Flight</keyword>
<keyword id="KW-0372">Hormone</keyword>
<keyword id="KW-0527">Neuropeptide</keyword>
<keyword id="KW-0873">Pyrrolidone carboxylic acid</keyword>
<keyword id="KW-0964">Secreted</keyword>
<dbReference type="GO" id="GO:0005576">
    <property type="term" value="C:extracellular region"/>
    <property type="evidence" value="ECO:0007669"/>
    <property type="project" value="UniProtKB-SubCell"/>
</dbReference>
<dbReference type="GO" id="GO:0005179">
    <property type="term" value="F:hormone activity"/>
    <property type="evidence" value="ECO:0007669"/>
    <property type="project" value="UniProtKB-KW"/>
</dbReference>
<dbReference type="GO" id="GO:0007629">
    <property type="term" value="P:flight behavior"/>
    <property type="evidence" value="ECO:0007669"/>
    <property type="project" value="UniProtKB-KW"/>
</dbReference>
<dbReference type="GO" id="GO:0007218">
    <property type="term" value="P:neuropeptide signaling pathway"/>
    <property type="evidence" value="ECO:0007669"/>
    <property type="project" value="UniProtKB-KW"/>
</dbReference>
<dbReference type="InterPro" id="IPR002047">
    <property type="entry name" value="Adipokinetic_hormone_CS"/>
</dbReference>
<dbReference type="PROSITE" id="PS00256">
    <property type="entry name" value="AKH"/>
    <property type="match status" value="1"/>
</dbReference>
<feature type="peptide" id="PRO_0000421658" description="Adipokinetic hormone" evidence="3">
    <location>
        <begin position="1"/>
        <end position="8"/>
    </location>
</feature>
<feature type="modified residue" description="Pyrrolidone carboxylic acid" evidence="3">
    <location>
        <position position="1"/>
    </location>
</feature>
<feature type="modified residue" description="Tryptophan amide" evidence="3">
    <location>
        <position position="8"/>
    </location>
</feature>
<organism>
    <name type="scientific">Praedatophasma maraisi</name>
    <name type="common">Gladiator</name>
    <name type="synonym">Heel-walker</name>
    <dbReference type="NCBI Taxonomy" id="409170"/>
    <lineage>
        <taxon>Eukaryota</taxon>
        <taxon>Metazoa</taxon>
        <taxon>Ecdysozoa</taxon>
        <taxon>Arthropoda</taxon>
        <taxon>Hexapoda</taxon>
        <taxon>Insecta</taxon>
        <taxon>Pterygota</taxon>
        <taxon>Neoptera</taxon>
        <taxon>Polyneoptera</taxon>
        <taxon>Mantophasmatodea</taxon>
        <taxon>Mantophasmatidae</taxon>
        <taxon>Praedatophasma</taxon>
    </lineage>
</organism>
<comment type="function">
    <text evidence="1">This hormone, released from cells in the corpora cardiaca, causes release of diglycerides from the fat body and stimulation of muscles to use these diglycerides as an energy source during energy-demanding processes.</text>
</comment>
<comment type="subcellular location">
    <subcellularLocation>
        <location evidence="6">Secreted</location>
    </subcellularLocation>
</comment>
<comment type="similarity">
    <text evidence="2">Belongs to the AKH/HRTH/RPCH family.</text>
</comment>
<sequence length="8" mass="934">QVNFSPGW</sequence>
<accession>B3A0H0</accession>
<name>AKH_PRAMA</name>
<evidence type="ECO:0000250" key="1">
    <source>
        <dbReference type="UniProtKB" id="P55319"/>
    </source>
</evidence>
<evidence type="ECO:0000255" key="2"/>
<evidence type="ECO:0000269" key="3">
    <source>
    </source>
</evidence>
<evidence type="ECO:0000303" key="4">
    <source>
    </source>
</evidence>
<evidence type="ECO:0000305" key="5"/>
<evidence type="ECO:0000305" key="6">
    <source>
    </source>
</evidence>
<proteinExistence type="evidence at protein level"/>